<dbReference type="EC" id="2.7.4.8"/>
<dbReference type="EMBL" id="AE005176">
    <property type="protein sequence ID" value="AAK05997.1"/>
    <property type="molecule type" value="Genomic_DNA"/>
</dbReference>
<dbReference type="PIR" id="C86862">
    <property type="entry name" value="C86862"/>
</dbReference>
<dbReference type="RefSeq" id="NP_268056.1">
    <property type="nucleotide sequence ID" value="NC_002662.1"/>
</dbReference>
<dbReference type="RefSeq" id="WP_003131468.1">
    <property type="nucleotide sequence ID" value="NC_002662.1"/>
</dbReference>
<dbReference type="SMR" id="Q9CEE3"/>
<dbReference type="PaxDb" id="272623-L149828"/>
<dbReference type="EnsemblBacteria" id="AAK05997">
    <property type="protein sequence ID" value="AAK05997"/>
    <property type="gene ID" value="L149828"/>
</dbReference>
<dbReference type="GeneID" id="89634256"/>
<dbReference type="KEGG" id="lla:L149828"/>
<dbReference type="PATRIC" id="fig|272623.7.peg.2034"/>
<dbReference type="eggNOG" id="COG0194">
    <property type="taxonomic scope" value="Bacteria"/>
</dbReference>
<dbReference type="HOGENOM" id="CLU_001715_1_0_9"/>
<dbReference type="OrthoDB" id="9808150at2"/>
<dbReference type="Proteomes" id="UP000002196">
    <property type="component" value="Chromosome"/>
</dbReference>
<dbReference type="GO" id="GO:0005829">
    <property type="term" value="C:cytosol"/>
    <property type="evidence" value="ECO:0007669"/>
    <property type="project" value="TreeGrafter"/>
</dbReference>
<dbReference type="GO" id="GO:0005524">
    <property type="term" value="F:ATP binding"/>
    <property type="evidence" value="ECO:0007669"/>
    <property type="project" value="UniProtKB-UniRule"/>
</dbReference>
<dbReference type="GO" id="GO:0004385">
    <property type="term" value="F:guanylate kinase activity"/>
    <property type="evidence" value="ECO:0007669"/>
    <property type="project" value="UniProtKB-UniRule"/>
</dbReference>
<dbReference type="CDD" id="cd00071">
    <property type="entry name" value="GMPK"/>
    <property type="match status" value="1"/>
</dbReference>
<dbReference type="FunFam" id="3.40.50.300:FF:000855">
    <property type="entry name" value="Guanylate kinase"/>
    <property type="match status" value="1"/>
</dbReference>
<dbReference type="FunFam" id="3.30.63.10:FF:000002">
    <property type="entry name" value="Guanylate kinase 1"/>
    <property type="match status" value="1"/>
</dbReference>
<dbReference type="Gene3D" id="3.30.63.10">
    <property type="entry name" value="Guanylate Kinase phosphate binding domain"/>
    <property type="match status" value="1"/>
</dbReference>
<dbReference type="Gene3D" id="3.40.50.300">
    <property type="entry name" value="P-loop containing nucleotide triphosphate hydrolases"/>
    <property type="match status" value="2"/>
</dbReference>
<dbReference type="HAMAP" id="MF_00328">
    <property type="entry name" value="Guanylate_kinase"/>
    <property type="match status" value="1"/>
</dbReference>
<dbReference type="InterPro" id="IPR008145">
    <property type="entry name" value="GK/Ca_channel_bsu"/>
</dbReference>
<dbReference type="InterPro" id="IPR008144">
    <property type="entry name" value="Guanylate_kin-like_dom"/>
</dbReference>
<dbReference type="InterPro" id="IPR017665">
    <property type="entry name" value="Guanylate_kinase"/>
</dbReference>
<dbReference type="InterPro" id="IPR020590">
    <property type="entry name" value="Guanylate_kinase_CS"/>
</dbReference>
<dbReference type="InterPro" id="IPR027417">
    <property type="entry name" value="P-loop_NTPase"/>
</dbReference>
<dbReference type="NCBIfam" id="TIGR03263">
    <property type="entry name" value="guanyl_kin"/>
    <property type="match status" value="1"/>
</dbReference>
<dbReference type="PANTHER" id="PTHR23117:SF13">
    <property type="entry name" value="GUANYLATE KINASE"/>
    <property type="match status" value="1"/>
</dbReference>
<dbReference type="PANTHER" id="PTHR23117">
    <property type="entry name" value="GUANYLATE KINASE-RELATED"/>
    <property type="match status" value="1"/>
</dbReference>
<dbReference type="Pfam" id="PF00625">
    <property type="entry name" value="Guanylate_kin"/>
    <property type="match status" value="1"/>
</dbReference>
<dbReference type="SMART" id="SM00072">
    <property type="entry name" value="GuKc"/>
    <property type="match status" value="1"/>
</dbReference>
<dbReference type="SUPFAM" id="SSF52540">
    <property type="entry name" value="P-loop containing nucleoside triphosphate hydrolases"/>
    <property type="match status" value="1"/>
</dbReference>
<dbReference type="PROSITE" id="PS00856">
    <property type="entry name" value="GUANYLATE_KINASE_1"/>
    <property type="match status" value="1"/>
</dbReference>
<dbReference type="PROSITE" id="PS50052">
    <property type="entry name" value="GUANYLATE_KINASE_2"/>
    <property type="match status" value="1"/>
</dbReference>
<reference key="1">
    <citation type="journal article" date="2001" name="Genome Res.">
        <title>The complete genome sequence of the lactic acid bacterium Lactococcus lactis ssp. lactis IL1403.</title>
        <authorList>
            <person name="Bolotin A."/>
            <person name="Wincker P."/>
            <person name="Mauger S."/>
            <person name="Jaillon O."/>
            <person name="Malarme K."/>
            <person name="Weissenbach J."/>
            <person name="Ehrlich S.D."/>
            <person name="Sorokin A."/>
        </authorList>
    </citation>
    <scope>NUCLEOTIDE SEQUENCE [LARGE SCALE GENOMIC DNA]</scope>
    <source>
        <strain>IL1403</strain>
    </source>
</reference>
<keyword id="KW-0067">ATP-binding</keyword>
<keyword id="KW-0963">Cytoplasm</keyword>
<keyword id="KW-0418">Kinase</keyword>
<keyword id="KW-0547">Nucleotide-binding</keyword>
<keyword id="KW-1185">Reference proteome</keyword>
<keyword id="KW-0808">Transferase</keyword>
<sequence length="205" mass="23623">MRERGLLIVFSGPSGVGKGTVRAKIFESENNFEYSVSMTTRKQRPGEVDGKDYYFRTRDEFEEMIRNGQMLEYAEYVGNYYGTPLTYVNQTLDEGKDVFLEIEVQGALQVKEKVPDGVFVFLTPPDLEELRGRLVGRGTDSAEVIASRLEKAKEEIRLMSEYDYAVVNDKVELAAERVKKIIEAEHYRVDRVIERYVHMIDDVKV</sequence>
<feature type="chain" id="PRO_0000170551" description="Guanylate kinase">
    <location>
        <begin position="1"/>
        <end position="205"/>
    </location>
</feature>
<feature type="domain" description="Guanylate kinase-like">
    <location>
        <begin position="5"/>
        <end position="183"/>
    </location>
</feature>
<feature type="binding site" evidence="1">
    <location>
        <begin position="12"/>
        <end position="19"/>
    </location>
    <ligand>
        <name>ATP</name>
        <dbReference type="ChEBI" id="CHEBI:30616"/>
    </ligand>
</feature>
<evidence type="ECO:0000250" key="1"/>
<evidence type="ECO:0000305" key="2"/>
<organism>
    <name type="scientific">Lactococcus lactis subsp. lactis (strain IL1403)</name>
    <name type="common">Streptococcus lactis</name>
    <dbReference type="NCBI Taxonomy" id="272623"/>
    <lineage>
        <taxon>Bacteria</taxon>
        <taxon>Bacillati</taxon>
        <taxon>Bacillota</taxon>
        <taxon>Bacilli</taxon>
        <taxon>Lactobacillales</taxon>
        <taxon>Streptococcaceae</taxon>
        <taxon>Lactococcus</taxon>
    </lineage>
</organism>
<comment type="function">
    <text evidence="1">Essential for recycling GMP and indirectly, cGMP.</text>
</comment>
<comment type="catalytic activity">
    <reaction>
        <text>GMP + ATP = GDP + ADP</text>
        <dbReference type="Rhea" id="RHEA:20780"/>
        <dbReference type="ChEBI" id="CHEBI:30616"/>
        <dbReference type="ChEBI" id="CHEBI:58115"/>
        <dbReference type="ChEBI" id="CHEBI:58189"/>
        <dbReference type="ChEBI" id="CHEBI:456216"/>
        <dbReference type="EC" id="2.7.4.8"/>
    </reaction>
</comment>
<comment type="subcellular location">
    <subcellularLocation>
        <location evidence="1">Cytoplasm</location>
    </subcellularLocation>
</comment>
<comment type="similarity">
    <text evidence="2">Belongs to the guanylate kinase family.</text>
</comment>
<proteinExistence type="inferred from homology"/>
<protein>
    <recommendedName>
        <fullName>Guanylate kinase</fullName>
        <ecNumber>2.7.4.8</ecNumber>
    </recommendedName>
    <alternativeName>
        <fullName>GMP kinase</fullName>
    </alternativeName>
</protein>
<name>KGUA_LACLA</name>
<gene>
    <name type="primary">gmk</name>
    <name type="ordered locus">LL1899</name>
    <name type="ORF">L149828</name>
</gene>
<accession>Q9CEE3</accession>